<name>DNAE2_MYCTO</name>
<accession>P9WNT4</accession>
<accession>L0TF55</accession>
<accession>O50399</accession>
<accession>Q7D5L9</accession>
<evidence type="ECO:0000250" key="1"/>
<evidence type="ECO:0000256" key="2">
    <source>
        <dbReference type="SAM" id="MobiDB-lite"/>
    </source>
</evidence>
<evidence type="ECO:0000305" key="3"/>
<proteinExistence type="inferred from homology"/>
<protein>
    <recommendedName>
        <fullName>Error-prone DNA polymerase</fullName>
        <ecNumber>2.7.7.7</ecNumber>
    </recommendedName>
</protein>
<keyword id="KW-0963">Cytoplasm</keyword>
<keyword id="KW-0227">DNA damage</keyword>
<keyword id="KW-0234">DNA repair</keyword>
<keyword id="KW-0235">DNA replication</keyword>
<keyword id="KW-0239">DNA-directed DNA polymerase</keyword>
<keyword id="KW-0548">Nucleotidyltransferase</keyword>
<keyword id="KW-1185">Reference proteome</keyword>
<keyword id="KW-0808">Transferase</keyword>
<sequence>MFDILWNVGWSNGPPSWAEMERVLNGKPRHAGVPAFDADGDVPRSRKRGAYQPPGRERVGSSVAYAELHAHSAYSFLDGASTPEELVEEAARLGLCALALTDHDGLYGAVRFAEAAAELDVRTVFGAELSLGATARTERPDPPGPHLLVLARGPEGYRRLSRQLAAAHLAGGEKGKPRYDFDALTEAAGGHWHILTGCRKGHVRQALSQGGPAAAQRALADLVDRFTPSRVSIELTHHGHPLDDERNAALAGLAPRFGVGIVATTGAHFADPSRGRLAMAMAAIRARRSLDSAAGWLAPLGGAHLRSGEEMARLFAWCPEAVTAAAELGERCAFGLQLIAPRLPPFDVPDGHTEDSWLRSLVMAGARERYGPPKSAPRAYSQIEHELKVIAQLRFPGYFLVVHDITRFCRDNDILCQGRGSAANSAVCYALGVTAVDPVANELLFERFLSPARDGPPDIDIDIESDQREKVIQYVYHKYGRDYAAQVANVITYRGRSAVRDMARALGFSPGQQDAWSKQVSHWTGQADDVDGIPEQVIDLATQIRNLPRHLGIHSGGMVICDRPIADVCPVEWARMANRSVLQWDKDDCAAIGLVKFDLLGLGMLSALHYAKDLVAEHKGIEVDLARLDLSEPAVYEMLARADSVGVFQVESRAQMATLPRLKPRVFYDLVVEVALIRPGPIQGGSVHPYIRRRNGVDPVIYEHPSMAPALRKTLGVPLFQEQLMQLAVDCAGFSAAEADQLRRAMGSKRSTERMRRLRGRFYDGMRALHGAPDEVIDRIYEKLEAFANFGFPESHALSFASLVFYSAWFKLHHPAAFCAALLRAQPMGFYSPQSLVADARRHGVAVHGPCVNASLAHATCENAGTEVRLGLGAVRYLGAELAEKLVAERTANGPFTSLPDLTSRVQLSVPQVEALATAGALGCFGMSRREALWAAGAAATGRPDRLPGVGSSSHIPALPGMSELELAAADVWATGVSPDSYPTQFLRADLDAMGVLPAERLGSVSDGDRVLIAGAVTHRQRPATAQGVTFINLEDETGMVNVLCTPGVWARHRKLAHTAPALLIRGQVQNASGAITVVAERMGRLTLAVGARSRDFR</sequence>
<dbReference type="EC" id="2.7.7.7"/>
<dbReference type="EMBL" id="AE000516">
    <property type="protein sequence ID" value="AAK47817.1"/>
    <property type="molecule type" value="Genomic_DNA"/>
</dbReference>
<dbReference type="PIR" id="A70972">
    <property type="entry name" value="A70972"/>
</dbReference>
<dbReference type="SMR" id="P9WNT4"/>
<dbReference type="KEGG" id="mtc:MT3480"/>
<dbReference type="HOGENOM" id="CLU_001600_4_0_11"/>
<dbReference type="Proteomes" id="UP000001020">
    <property type="component" value="Chromosome"/>
</dbReference>
<dbReference type="GO" id="GO:0005737">
    <property type="term" value="C:cytoplasm"/>
    <property type="evidence" value="ECO:0007669"/>
    <property type="project" value="UniProtKB-SubCell"/>
</dbReference>
<dbReference type="GO" id="GO:0008408">
    <property type="term" value="F:3'-5' exonuclease activity"/>
    <property type="evidence" value="ECO:0007669"/>
    <property type="project" value="InterPro"/>
</dbReference>
<dbReference type="GO" id="GO:0003887">
    <property type="term" value="F:DNA-directed DNA polymerase activity"/>
    <property type="evidence" value="ECO:0007669"/>
    <property type="project" value="UniProtKB-UniRule"/>
</dbReference>
<dbReference type="GO" id="GO:0003676">
    <property type="term" value="F:nucleic acid binding"/>
    <property type="evidence" value="ECO:0007669"/>
    <property type="project" value="InterPro"/>
</dbReference>
<dbReference type="GO" id="GO:0006281">
    <property type="term" value="P:DNA repair"/>
    <property type="evidence" value="ECO:0007669"/>
    <property type="project" value="UniProtKB-UniRule"/>
</dbReference>
<dbReference type="GO" id="GO:0006260">
    <property type="term" value="P:DNA replication"/>
    <property type="evidence" value="ECO:0007669"/>
    <property type="project" value="UniProtKB-KW"/>
</dbReference>
<dbReference type="CDD" id="cd04485">
    <property type="entry name" value="DnaE_OBF"/>
    <property type="match status" value="1"/>
</dbReference>
<dbReference type="FunFam" id="1.10.150.870:FF:000002">
    <property type="entry name" value="Error-prone DNA polymerase"/>
    <property type="match status" value="1"/>
</dbReference>
<dbReference type="FunFam" id="3.20.20.140:FF:000150">
    <property type="entry name" value="Error-prone DNA polymerase"/>
    <property type="match status" value="1"/>
</dbReference>
<dbReference type="Gene3D" id="1.10.150.870">
    <property type="match status" value="1"/>
</dbReference>
<dbReference type="Gene3D" id="3.20.20.140">
    <property type="entry name" value="Metal-dependent hydrolases"/>
    <property type="match status" value="1"/>
</dbReference>
<dbReference type="HAMAP" id="MF_01902">
    <property type="entry name" value="DNApol_error_prone"/>
    <property type="match status" value="1"/>
</dbReference>
<dbReference type="InterPro" id="IPR011708">
    <property type="entry name" value="DNA_pol3_alpha_NTPase_dom"/>
</dbReference>
<dbReference type="InterPro" id="IPR040982">
    <property type="entry name" value="DNA_pol3_finger"/>
</dbReference>
<dbReference type="InterPro" id="IPR023073">
    <property type="entry name" value="DnaE2"/>
</dbReference>
<dbReference type="InterPro" id="IPR004805">
    <property type="entry name" value="DnaE2/DnaE/PolC"/>
</dbReference>
<dbReference type="InterPro" id="IPR029460">
    <property type="entry name" value="DNAPol_HHH"/>
</dbReference>
<dbReference type="InterPro" id="IPR004365">
    <property type="entry name" value="NA-bd_OB_tRNA"/>
</dbReference>
<dbReference type="InterPro" id="IPR004013">
    <property type="entry name" value="PHP_dom"/>
</dbReference>
<dbReference type="InterPro" id="IPR003141">
    <property type="entry name" value="Pol/His_phosphatase_N"/>
</dbReference>
<dbReference type="InterPro" id="IPR016195">
    <property type="entry name" value="Pol/histidinol_Pase-like"/>
</dbReference>
<dbReference type="NCBIfam" id="TIGR00594">
    <property type="entry name" value="polc"/>
    <property type="match status" value="1"/>
</dbReference>
<dbReference type="NCBIfam" id="NF004225">
    <property type="entry name" value="PRK05672.1"/>
    <property type="match status" value="1"/>
</dbReference>
<dbReference type="PANTHER" id="PTHR32294">
    <property type="entry name" value="DNA POLYMERASE III SUBUNIT ALPHA"/>
    <property type="match status" value="1"/>
</dbReference>
<dbReference type="PANTHER" id="PTHR32294:SF4">
    <property type="entry name" value="ERROR-PRONE DNA POLYMERASE"/>
    <property type="match status" value="1"/>
</dbReference>
<dbReference type="Pfam" id="PF07733">
    <property type="entry name" value="DNA_pol3_alpha"/>
    <property type="match status" value="1"/>
</dbReference>
<dbReference type="Pfam" id="PF17657">
    <property type="entry name" value="DNA_pol3_finger"/>
    <property type="match status" value="1"/>
</dbReference>
<dbReference type="Pfam" id="PF14579">
    <property type="entry name" value="HHH_6"/>
    <property type="match status" value="1"/>
</dbReference>
<dbReference type="Pfam" id="PF02811">
    <property type="entry name" value="PHP"/>
    <property type="match status" value="1"/>
</dbReference>
<dbReference type="Pfam" id="PF01336">
    <property type="entry name" value="tRNA_anti-codon"/>
    <property type="match status" value="1"/>
</dbReference>
<dbReference type="SMART" id="SM00481">
    <property type="entry name" value="POLIIIAc"/>
    <property type="match status" value="1"/>
</dbReference>
<dbReference type="SUPFAM" id="SSF89550">
    <property type="entry name" value="PHP domain-like"/>
    <property type="match status" value="1"/>
</dbReference>
<gene>
    <name type="primary">dnaE2</name>
    <name type="ordered locus">MT3480</name>
</gene>
<comment type="function">
    <text evidence="1">DNA polymerase involved in damage-induced mutagenesis and translesion synthesis (TLS). It is not the major replicative DNA polymerase (By similarity).</text>
</comment>
<comment type="catalytic activity">
    <reaction>
        <text>DNA(n) + a 2'-deoxyribonucleoside 5'-triphosphate = DNA(n+1) + diphosphate</text>
        <dbReference type="Rhea" id="RHEA:22508"/>
        <dbReference type="Rhea" id="RHEA-COMP:17339"/>
        <dbReference type="Rhea" id="RHEA-COMP:17340"/>
        <dbReference type="ChEBI" id="CHEBI:33019"/>
        <dbReference type="ChEBI" id="CHEBI:61560"/>
        <dbReference type="ChEBI" id="CHEBI:173112"/>
        <dbReference type="EC" id="2.7.7.7"/>
    </reaction>
</comment>
<comment type="subcellular location">
    <subcellularLocation>
        <location evidence="1">Cytoplasm</location>
    </subcellularLocation>
</comment>
<comment type="similarity">
    <text evidence="3">Belongs to the DNA polymerase type-C family. DnaE2 subfamily.</text>
</comment>
<organism>
    <name type="scientific">Mycobacterium tuberculosis (strain CDC 1551 / Oshkosh)</name>
    <dbReference type="NCBI Taxonomy" id="83331"/>
    <lineage>
        <taxon>Bacteria</taxon>
        <taxon>Bacillati</taxon>
        <taxon>Actinomycetota</taxon>
        <taxon>Actinomycetes</taxon>
        <taxon>Mycobacteriales</taxon>
        <taxon>Mycobacteriaceae</taxon>
        <taxon>Mycobacterium</taxon>
        <taxon>Mycobacterium tuberculosis complex</taxon>
    </lineage>
</organism>
<feature type="chain" id="PRO_0000427071" description="Error-prone DNA polymerase">
    <location>
        <begin position="1"/>
        <end position="1098"/>
    </location>
</feature>
<feature type="region of interest" description="Disordered" evidence="2">
    <location>
        <begin position="34"/>
        <end position="57"/>
    </location>
</feature>
<reference key="1">
    <citation type="journal article" date="2002" name="J. Bacteriol.">
        <title>Whole-genome comparison of Mycobacterium tuberculosis clinical and laboratory strains.</title>
        <authorList>
            <person name="Fleischmann R.D."/>
            <person name="Alland D."/>
            <person name="Eisen J.A."/>
            <person name="Carpenter L."/>
            <person name="White O."/>
            <person name="Peterson J.D."/>
            <person name="DeBoy R.T."/>
            <person name="Dodson R.J."/>
            <person name="Gwinn M.L."/>
            <person name="Haft D.H."/>
            <person name="Hickey E.K."/>
            <person name="Kolonay J.F."/>
            <person name="Nelson W.C."/>
            <person name="Umayam L.A."/>
            <person name="Ermolaeva M.D."/>
            <person name="Salzberg S.L."/>
            <person name="Delcher A."/>
            <person name="Utterback T.R."/>
            <person name="Weidman J.F."/>
            <person name="Khouri H.M."/>
            <person name="Gill J."/>
            <person name="Mikula A."/>
            <person name="Bishai W."/>
            <person name="Jacobs W.R. Jr."/>
            <person name="Venter J.C."/>
            <person name="Fraser C.M."/>
        </authorList>
    </citation>
    <scope>NUCLEOTIDE SEQUENCE [LARGE SCALE GENOMIC DNA]</scope>
    <source>
        <strain>CDC 1551 / Oshkosh</strain>
    </source>
</reference>